<accession>A1C712</accession>
<gene>
    <name type="primary">srb7</name>
    <name type="synonym">med21</name>
    <name type="ORF">ACLA_072160</name>
</gene>
<protein>
    <recommendedName>
        <fullName>Mediator of RNA polymerase II transcription subunit 21</fullName>
    </recommendedName>
    <alternativeName>
        <fullName>Mediator complex subunit 21</fullName>
    </alternativeName>
</protein>
<name>MED21_ASPCL</name>
<comment type="function">
    <text evidence="1">Component of the Mediator complex, a coactivator involved in the regulated transcription of nearly all RNA polymerase II-dependent genes. Mediator functions as a bridge to convey information from gene-specific regulatory proteins to the basal RNA polymerase II transcription machinery. Mediator is recruited to promoters by direct interactions with regulatory proteins and serves as a scaffold for the assembly of a functional preinitiation complex with RNA polymerase II and the general transcription factors (By similarity).</text>
</comment>
<comment type="subunit">
    <text evidence="1">Component of the Mediator complex.</text>
</comment>
<comment type="subcellular location">
    <subcellularLocation>
        <location evidence="1">Nucleus</location>
    </subcellularLocation>
</comment>
<comment type="similarity">
    <text evidence="4">Belongs to the Mediator complex subunit 21 family.</text>
</comment>
<dbReference type="EMBL" id="DS027045">
    <property type="protein sequence ID" value="EAW14183.1"/>
    <property type="molecule type" value="Genomic_DNA"/>
</dbReference>
<dbReference type="RefSeq" id="XP_001275609.1">
    <property type="nucleotide sequence ID" value="XM_001275608.1"/>
</dbReference>
<dbReference type="SMR" id="A1C712"/>
<dbReference type="STRING" id="344612.A1C712"/>
<dbReference type="EnsemblFungi" id="EAW14183">
    <property type="protein sequence ID" value="EAW14183"/>
    <property type="gene ID" value="ACLA_072160"/>
</dbReference>
<dbReference type="GeneID" id="4708121"/>
<dbReference type="KEGG" id="act:ACLA_072160"/>
<dbReference type="VEuPathDB" id="FungiDB:ACLA_072160"/>
<dbReference type="eggNOG" id="KOG1510">
    <property type="taxonomic scope" value="Eukaryota"/>
</dbReference>
<dbReference type="HOGENOM" id="CLU_094271_0_1_1"/>
<dbReference type="OMA" id="LTTYHDH"/>
<dbReference type="OrthoDB" id="526653at2759"/>
<dbReference type="Proteomes" id="UP000006701">
    <property type="component" value="Unassembled WGS sequence"/>
</dbReference>
<dbReference type="GO" id="GO:0016592">
    <property type="term" value="C:mediator complex"/>
    <property type="evidence" value="ECO:0007669"/>
    <property type="project" value="InterPro"/>
</dbReference>
<dbReference type="GO" id="GO:0003712">
    <property type="term" value="F:transcription coregulator activity"/>
    <property type="evidence" value="ECO:0007669"/>
    <property type="project" value="TreeGrafter"/>
</dbReference>
<dbReference type="GO" id="GO:0006357">
    <property type="term" value="P:regulation of transcription by RNA polymerase II"/>
    <property type="evidence" value="ECO:0007669"/>
    <property type="project" value="TreeGrafter"/>
</dbReference>
<dbReference type="Gene3D" id="6.10.280.10">
    <property type="entry name" value="Mediator complex, subunit Med21"/>
    <property type="match status" value="1"/>
</dbReference>
<dbReference type="InterPro" id="IPR037212">
    <property type="entry name" value="Med7/Med21-like"/>
</dbReference>
<dbReference type="InterPro" id="IPR021384">
    <property type="entry name" value="Mediator_Med21"/>
</dbReference>
<dbReference type="PANTHER" id="PTHR13381:SF0">
    <property type="entry name" value="MEDIATOR OF RNA POLYMERASE II TRANSCRIPTION SUBUNIT 21"/>
    <property type="match status" value="1"/>
</dbReference>
<dbReference type="PANTHER" id="PTHR13381">
    <property type="entry name" value="RNA POLYMERASE II HOLOENZYME COMPONENT SRB7"/>
    <property type="match status" value="1"/>
</dbReference>
<dbReference type="Pfam" id="PF11221">
    <property type="entry name" value="Med21"/>
    <property type="match status" value="1"/>
</dbReference>
<dbReference type="SUPFAM" id="SSF140718">
    <property type="entry name" value="Mediator hinge subcomplex-like"/>
    <property type="match status" value="1"/>
</dbReference>
<sequence>MADILTQLQTCLDQLATQFYATIGYLSTYHDNSPATTPTNIPNAAPALAKIPKNSTAPPVPAGAPVPSQSSPPPPQTQRGASEAAADPNLPPAPDSPRTFASRQRELARDLIIKEQQIEYLISVLPGIDSSEAEQEKRIRELEAELRGVEEEREAKIRELRTLGRTLERVMGAVETGIYGDRAVLERDS</sequence>
<keyword id="KW-0010">Activator</keyword>
<keyword id="KW-0175">Coiled coil</keyword>
<keyword id="KW-0539">Nucleus</keyword>
<keyword id="KW-1185">Reference proteome</keyword>
<keyword id="KW-0804">Transcription</keyword>
<keyword id="KW-0805">Transcription regulation</keyword>
<evidence type="ECO:0000250" key="1"/>
<evidence type="ECO:0000255" key="2"/>
<evidence type="ECO:0000256" key="3">
    <source>
        <dbReference type="SAM" id="MobiDB-lite"/>
    </source>
</evidence>
<evidence type="ECO:0000305" key="4"/>
<reference key="1">
    <citation type="journal article" date="2008" name="PLoS Genet.">
        <title>Genomic islands in the pathogenic filamentous fungus Aspergillus fumigatus.</title>
        <authorList>
            <person name="Fedorova N.D."/>
            <person name="Khaldi N."/>
            <person name="Joardar V.S."/>
            <person name="Maiti R."/>
            <person name="Amedeo P."/>
            <person name="Anderson M.J."/>
            <person name="Crabtree J."/>
            <person name="Silva J.C."/>
            <person name="Badger J.H."/>
            <person name="Albarraq A."/>
            <person name="Angiuoli S."/>
            <person name="Bussey H."/>
            <person name="Bowyer P."/>
            <person name="Cotty P.J."/>
            <person name="Dyer P.S."/>
            <person name="Egan A."/>
            <person name="Galens K."/>
            <person name="Fraser-Liggett C.M."/>
            <person name="Haas B.J."/>
            <person name="Inman J.M."/>
            <person name="Kent R."/>
            <person name="Lemieux S."/>
            <person name="Malavazi I."/>
            <person name="Orvis J."/>
            <person name="Roemer T."/>
            <person name="Ronning C.M."/>
            <person name="Sundaram J.P."/>
            <person name="Sutton G."/>
            <person name="Turner G."/>
            <person name="Venter J.C."/>
            <person name="White O.R."/>
            <person name="Whitty B.R."/>
            <person name="Youngman P."/>
            <person name="Wolfe K.H."/>
            <person name="Goldman G.H."/>
            <person name="Wortman J.R."/>
            <person name="Jiang B."/>
            <person name="Denning D.W."/>
            <person name="Nierman W.C."/>
        </authorList>
    </citation>
    <scope>NUCLEOTIDE SEQUENCE [LARGE SCALE GENOMIC DNA]</scope>
    <source>
        <strain>ATCC 1007 / CBS 513.65 / DSM 816 / NCTC 3887 / NRRL 1 / QM 1276 / 107</strain>
    </source>
</reference>
<feature type="chain" id="PRO_0000305956" description="Mediator of RNA polymerase II transcription subunit 21">
    <location>
        <begin position="1"/>
        <end position="189"/>
    </location>
</feature>
<feature type="region of interest" description="Disordered" evidence="3">
    <location>
        <begin position="50"/>
        <end position="102"/>
    </location>
</feature>
<feature type="coiled-coil region" evidence="2">
    <location>
        <begin position="127"/>
        <end position="170"/>
    </location>
</feature>
<feature type="compositionally biased region" description="Pro residues" evidence="3">
    <location>
        <begin position="58"/>
        <end position="76"/>
    </location>
</feature>
<organism>
    <name type="scientific">Aspergillus clavatus (strain ATCC 1007 / CBS 513.65 / DSM 816 / NCTC 3887 / NRRL 1 / QM 1276 / 107)</name>
    <dbReference type="NCBI Taxonomy" id="344612"/>
    <lineage>
        <taxon>Eukaryota</taxon>
        <taxon>Fungi</taxon>
        <taxon>Dikarya</taxon>
        <taxon>Ascomycota</taxon>
        <taxon>Pezizomycotina</taxon>
        <taxon>Eurotiomycetes</taxon>
        <taxon>Eurotiomycetidae</taxon>
        <taxon>Eurotiales</taxon>
        <taxon>Aspergillaceae</taxon>
        <taxon>Aspergillus</taxon>
        <taxon>Aspergillus subgen. Fumigati</taxon>
    </lineage>
</organism>
<proteinExistence type="inferred from homology"/>